<reference key="1">
    <citation type="journal article" date="2005" name="Nucleic Acids Res.">
        <title>Genome dynamics and diversity of Shigella species, the etiologic agents of bacillary dysentery.</title>
        <authorList>
            <person name="Yang F."/>
            <person name="Yang J."/>
            <person name="Zhang X."/>
            <person name="Chen L."/>
            <person name="Jiang Y."/>
            <person name="Yan Y."/>
            <person name="Tang X."/>
            <person name="Wang J."/>
            <person name="Xiong Z."/>
            <person name="Dong J."/>
            <person name="Xue Y."/>
            <person name="Zhu Y."/>
            <person name="Xu X."/>
            <person name="Sun L."/>
            <person name="Chen S."/>
            <person name="Nie H."/>
            <person name="Peng J."/>
            <person name="Xu J."/>
            <person name="Wang Y."/>
            <person name="Yuan Z."/>
            <person name="Wen Y."/>
            <person name="Yao Z."/>
            <person name="Shen Y."/>
            <person name="Qiang B."/>
            <person name="Hou Y."/>
            <person name="Yu J."/>
            <person name="Jin Q."/>
        </authorList>
    </citation>
    <scope>NUCLEOTIDE SEQUENCE [LARGE SCALE GENOMIC DNA]</scope>
    <source>
        <strain>Ss046</strain>
    </source>
</reference>
<name>ARAA_SHISS</name>
<organism>
    <name type="scientific">Shigella sonnei (strain Ss046)</name>
    <dbReference type="NCBI Taxonomy" id="300269"/>
    <lineage>
        <taxon>Bacteria</taxon>
        <taxon>Pseudomonadati</taxon>
        <taxon>Pseudomonadota</taxon>
        <taxon>Gammaproteobacteria</taxon>
        <taxon>Enterobacterales</taxon>
        <taxon>Enterobacteriaceae</taxon>
        <taxon>Shigella</taxon>
    </lineage>
</organism>
<keyword id="KW-0054">Arabinose catabolism</keyword>
<keyword id="KW-0119">Carbohydrate metabolism</keyword>
<keyword id="KW-0413">Isomerase</keyword>
<keyword id="KW-0464">Manganese</keyword>
<keyword id="KW-0479">Metal-binding</keyword>
<keyword id="KW-1185">Reference proteome</keyword>
<protein>
    <recommendedName>
        <fullName evidence="1">L-arabinose isomerase</fullName>
        <ecNumber evidence="1">5.3.1.4</ecNumber>
    </recommendedName>
</protein>
<accession>Q3Z5U9</accession>
<evidence type="ECO:0000255" key="1">
    <source>
        <dbReference type="HAMAP-Rule" id="MF_00519"/>
    </source>
</evidence>
<sequence length="500" mass="56103">MTIFDNYEVWFVIGSQHLYGPETLRQVTQHAEHVVNALNTEAKLPCKLVLKPLGTTPDEITAICRDANYDDRCAGLVVWLHTFSPAKMWINGLTMLNKPLLQFHTQFNAALPWDSIDMDFMNLNQTAHGGREFGFIGARMRQQHAVVTGHWQDKQAHERIGSWMRQAVSKQDTRHLKVCRFGDNMREVAVTDGDKVAAQIKFGFSVNTWAVGDLVQVVNSISDGDVNALVDEYESCYTMTPATQIHGEKRQNVLEAARIELGMKRFLEQGGFHAFTTTFEDLHGLKQLPGLAVQRLMQQGYGFAGEGDWKTAALLRIMKVMSTGLQGGTSFMEDYTYHFEKGNDLVLGSHMLEVCPSIAVEEKPILDVQHLGIGGKDDPARLIFNTQTGPAIVASLIDLGDRYRLLVNCIDTVKTPHSLPKLPVANALWKAQPDLPTASEAWILAGGAHHTVFSHALNLNDMRQFAEMHDIEITVIDNDTRLPAFKDALRWNEVYYGFRR</sequence>
<comment type="function">
    <text evidence="1">Catalyzes the conversion of L-arabinose to L-ribulose.</text>
</comment>
<comment type="catalytic activity">
    <reaction evidence="1">
        <text>beta-L-arabinopyranose = L-ribulose</text>
        <dbReference type="Rhea" id="RHEA:14821"/>
        <dbReference type="ChEBI" id="CHEBI:16880"/>
        <dbReference type="ChEBI" id="CHEBI:40886"/>
        <dbReference type="EC" id="5.3.1.4"/>
    </reaction>
</comment>
<comment type="cofactor">
    <cofactor evidence="1">
        <name>Mn(2+)</name>
        <dbReference type="ChEBI" id="CHEBI:29035"/>
    </cofactor>
    <text evidence="1">Binds 1 Mn(2+) ion per subunit.</text>
</comment>
<comment type="pathway">
    <text evidence="1">Carbohydrate degradation; L-arabinose degradation via L-ribulose; D-xylulose 5-phosphate from L-arabinose (bacterial route): step 1/3.</text>
</comment>
<comment type="subunit">
    <text evidence="1">Homohexamer.</text>
</comment>
<comment type="similarity">
    <text evidence="1">Belongs to the arabinose isomerase family.</text>
</comment>
<dbReference type="EC" id="5.3.1.4" evidence="1"/>
<dbReference type="EMBL" id="CP000038">
    <property type="protein sequence ID" value="AAZ86863.1"/>
    <property type="molecule type" value="Genomic_DNA"/>
</dbReference>
<dbReference type="RefSeq" id="WP_000151734.1">
    <property type="nucleotide sequence ID" value="NC_007384.1"/>
</dbReference>
<dbReference type="SMR" id="Q3Z5U9"/>
<dbReference type="GeneID" id="93777375"/>
<dbReference type="KEGG" id="ssn:SSON_0068"/>
<dbReference type="HOGENOM" id="CLU_045663_0_0_6"/>
<dbReference type="UniPathway" id="UPA00145">
    <property type="reaction ID" value="UER00565"/>
</dbReference>
<dbReference type="Proteomes" id="UP000002529">
    <property type="component" value="Chromosome"/>
</dbReference>
<dbReference type="GO" id="GO:0005829">
    <property type="term" value="C:cytosol"/>
    <property type="evidence" value="ECO:0007669"/>
    <property type="project" value="TreeGrafter"/>
</dbReference>
<dbReference type="GO" id="GO:0008733">
    <property type="term" value="F:L-arabinose isomerase activity"/>
    <property type="evidence" value="ECO:0007669"/>
    <property type="project" value="UniProtKB-UniRule"/>
</dbReference>
<dbReference type="GO" id="GO:0030145">
    <property type="term" value="F:manganese ion binding"/>
    <property type="evidence" value="ECO:0007669"/>
    <property type="project" value="UniProtKB-UniRule"/>
</dbReference>
<dbReference type="GO" id="GO:0019569">
    <property type="term" value="P:L-arabinose catabolic process to xylulose 5-phosphate"/>
    <property type="evidence" value="ECO:0007669"/>
    <property type="project" value="UniProtKB-UniRule"/>
</dbReference>
<dbReference type="CDD" id="cd03557">
    <property type="entry name" value="L-arabinose_isomerase"/>
    <property type="match status" value="1"/>
</dbReference>
<dbReference type="FunFam" id="3.40.50.10940:FF:000001">
    <property type="entry name" value="L-arabinose isomerase"/>
    <property type="match status" value="1"/>
</dbReference>
<dbReference type="Gene3D" id="3.40.50.10940">
    <property type="match status" value="1"/>
</dbReference>
<dbReference type="HAMAP" id="MF_00519">
    <property type="entry name" value="Arabinose_Isome"/>
    <property type="match status" value="1"/>
</dbReference>
<dbReference type="InterPro" id="IPR024664">
    <property type="entry name" value="Ara_Isoase_C"/>
</dbReference>
<dbReference type="InterPro" id="IPR055390">
    <property type="entry name" value="AraA_central"/>
</dbReference>
<dbReference type="InterPro" id="IPR055389">
    <property type="entry name" value="AraA_N"/>
</dbReference>
<dbReference type="InterPro" id="IPR038583">
    <property type="entry name" value="AraA_N_sf"/>
</dbReference>
<dbReference type="InterPro" id="IPR004216">
    <property type="entry name" value="Fuc/Ara_isomerase_C"/>
</dbReference>
<dbReference type="InterPro" id="IPR009015">
    <property type="entry name" value="Fucose_isomerase_N/cen_sf"/>
</dbReference>
<dbReference type="InterPro" id="IPR003762">
    <property type="entry name" value="Lara_isomerase"/>
</dbReference>
<dbReference type="NCBIfam" id="NF002795">
    <property type="entry name" value="PRK02929.1"/>
    <property type="match status" value="1"/>
</dbReference>
<dbReference type="PANTHER" id="PTHR38464">
    <property type="entry name" value="L-ARABINOSE ISOMERASE"/>
    <property type="match status" value="1"/>
</dbReference>
<dbReference type="PANTHER" id="PTHR38464:SF1">
    <property type="entry name" value="L-ARABINOSE ISOMERASE"/>
    <property type="match status" value="1"/>
</dbReference>
<dbReference type="Pfam" id="PF24856">
    <property type="entry name" value="AraA_central"/>
    <property type="match status" value="1"/>
</dbReference>
<dbReference type="Pfam" id="PF02610">
    <property type="entry name" value="AraA_N"/>
    <property type="match status" value="1"/>
</dbReference>
<dbReference type="Pfam" id="PF11762">
    <property type="entry name" value="Arabinose_Iso_C"/>
    <property type="match status" value="1"/>
</dbReference>
<dbReference type="PIRSF" id="PIRSF001478">
    <property type="entry name" value="L-ara_isomerase"/>
    <property type="match status" value="1"/>
</dbReference>
<dbReference type="SUPFAM" id="SSF50443">
    <property type="entry name" value="FucI/AraA C-terminal domain-like"/>
    <property type="match status" value="1"/>
</dbReference>
<dbReference type="SUPFAM" id="SSF53743">
    <property type="entry name" value="FucI/AraA N-terminal and middle domains"/>
    <property type="match status" value="1"/>
</dbReference>
<proteinExistence type="inferred from homology"/>
<feature type="chain" id="PRO_0000259346" description="L-arabinose isomerase">
    <location>
        <begin position="1"/>
        <end position="500"/>
    </location>
</feature>
<feature type="binding site" evidence="1">
    <location>
        <position position="306"/>
    </location>
    <ligand>
        <name>Mn(2+)</name>
        <dbReference type="ChEBI" id="CHEBI:29035"/>
    </ligand>
</feature>
<feature type="binding site" evidence="1">
    <location>
        <position position="333"/>
    </location>
    <ligand>
        <name>Mn(2+)</name>
        <dbReference type="ChEBI" id="CHEBI:29035"/>
    </ligand>
</feature>
<feature type="binding site" evidence="1">
    <location>
        <position position="350"/>
    </location>
    <ligand>
        <name>Mn(2+)</name>
        <dbReference type="ChEBI" id="CHEBI:29035"/>
    </ligand>
</feature>
<feature type="binding site" evidence="1">
    <location>
        <position position="450"/>
    </location>
    <ligand>
        <name>Mn(2+)</name>
        <dbReference type="ChEBI" id="CHEBI:29035"/>
    </ligand>
</feature>
<gene>
    <name evidence="1" type="primary">araA</name>
    <name type="ordered locus">SSON_0068</name>
</gene>